<keyword id="KW-0002">3D-structure</keyword>
<keyword id="KW-0249">Electron transport</keyword>
<keyword id="KW-0349">Heme</keyword>
<keyword id="KW-0408">Iron</keyword>
<keyword id="KW-0472">Membrane</keyword>
<keyword id="KW-0479">Metal-binding</keyword>
<keyword id="KW-0496">Mitochondrion</keyword>
<keyword id="KW-0999">Mitochondrion inner membrane</keyword>
<keyword id="KW-1185">Reference proteome</keyword>
<keyword id="KW-0679">Respiratory chain</keyword>
<keyword id="KW-0812">Transmembrane</keyword>
<keyword id="KW-1133">Transmembrane helix</keyword>
<keyword id="KW-0813">Transport</keyword>
<keyword id="KW-0830">Ubiquinone</keyword>
<gene>
    <name type="primary">MT-CYB</name>
    <name type="synonym">COB</name>
    <name type="synonym">CYTB</name>
    <name type="synonym">MTCYB</name>
</gene>
<organism>
    <name type="scientific">Sus scrofa</name>
    <name type="common">Pig</name>
    <dbReference type="NCBI Taxonomy" id="9823"/>
    <lineage>
        <taxon>Eukaryota</taxon>
        <taxon>Metazoa</taxon>
        <taxon>Chordata</taxon>
        <taxon>Craniata</taxon>
        <taxon>Vertebrata</taxon>
        <taxon>Euteleostomi</taxon>
        <taxon>Mammalia</taxon>
        <taxon>Eutheria</taxon>
        <taxon>Laurasiatheria</taxon>
        <taxon>Artiodactyla</taxon>
        <taxon>Suina</taxon>
        <taxon>Suidae</taxon>
        <taxon>Sus</taxon>
    </lineage>
</organism>
<name>CYB_PIG</name>
<protein>
    <recommendedName>
        <fullName>Cytochrome b</fullName>
    </recommendedName>
    <alternativeName>
        <fullName>Complex III subunit 3</fullName>
    </alternativeName>
    <alternativeName>
        <fullName>Complex III subunit III</fullName>
    </alternativeName>
    <alternativeName>
        <fullName>Cytochrome b-c1 complex subunit 3</fullName>
    </alternativeName>
    <alternativeName>
        <fullName>Ubiquinol-cytochrome-c reductase complex cytochrome b subunit</fullName>
    </alternativeName>
</protein>
<comment type="function">
    <text evidence="5">Component of the ubiquinol-cytochrome c reductase complex (complex III or cytochrome b-c1 complex) that is part of the mitochondrial respiratory chain. The b-c1 complex mediates electron transfer from ubiquinol to cytochrome c. Contributes to the generation of a proton gradient across the mitochondrial membrane that is then used for ATP synthesis.</text>
</comment>
<comment type="cofactor">
    <cofactor evidence="2">
        <name>heme b</name>
        <dbReference type="ChEBI" id="CHEBI:60344"/>
    </cofactor>
    <text evidence="2">Binds 2 heme b groups non-covalently.</text>
</comment>
<comment type="subunit">
    <text evidence="2">The cytochrome bc1 complex contains 11 subunits: 3 respiratory subunits (MT-CYB, CYC1 and UQCRFS1), 2 core proteins (UQCRC1 and UQCRC2) and 6 low-molecular weight proteins (UQCRH/QCR6, UQCRB/QCR7, UQCRQ/QCR8, UQCR10/QCR9, UQCR11/QCR10 and a cleavage product of UQCRFS1). This cytochrome bc1 complex then forms a dimer.</text>
</comment>
<comment type="subcellular location">
    <subcellularLocation>
        <location evidence="2">Mitochondrion inner membrane</location>
        <topology evidence="2">Multi-pass membrane protein</topology>
    </subcellularLocation>
</comment>
<comment type="miscellaneous">
    <text evidence="1">Heme 1 (or BL or b562) is low-potential and absorbs at about 562 nm, and heme 2 (or BH or b566) is high-potential and absorbs at about 566 nm.</text>
</comment>
<comment type="similarity">
    <text evidence="3 4">Belongs to the cytochrome b family.</text>
</comment>
<comment type="caution">
    <text evidence="2">The full-length protein contains only eight transmembrane helices, not nine as predicted by bioinformatics tools.</text>
</comment>
<feature type="chain" id="PRO_0000061397" description="Cytochrome b">
    <location>
        <begin position="1"/>
        <end position="379"/>
    </location>
</feature>
<feature type="transmembrane region" description="Helical" evidence="2">
    <location>
        <begin position="33"/>
        <end position="53"/>
    </location>
</feature>
<feature type="transmembrane region" description="Helical" evidence="2">
    <location>
        <begin position="77"/>
        <end position="98"/>
    </location>
</feature>
<feature type="transmembrane region" description="Helical" evidence="2">
    <location>
        <begin position="113"/>
        <end position="133"/>
    </location>
</feature>
<feature type="transmembrane region" description="Helical" evidence="2">
    <location>
        <begin position="178"/>
        <end position="198"/>
    </location>
</feature>
<feature type="transmembrane region" description="Helical" evidence="2">
    <location>
        <begin position="226"/>
        <end position="246"/>
    </location>
</feature>
<feature type="transmembrane region" description="Helical" evidence="2">
    <location>
        <begin position="288"/>
        <end position="308"/>
    </location>
</feature>
<feature type="transmembrane region" description="Helical" evidence="2">
    <location>
        <begin position="320"/>
        <end position="340"/>
    </location>
</feature>
<feature type="transmembrane region" description="Helical" evidence="2">
    <location>
        <begin position="347"/>
        <end position="367"/>
    </location>
</feature>
<feature type="binding site" description="axial binding residue" evidence="4">
    <location>
        <position position="83"/>
    </location>
    <ligand>
        <name>heme b</name>
        <dbReference type="ChEBI" id="CHEBI:60344"/>
        <label>b562</label>
    </ligand>
    <ligandPart>
        <name>Fe</name>
        <dbReference type="ChEBI" id="CHEBI:18248"/>
    </ligandPart>
</feature>
<feature type="binding site" description="axial binding residue" evidence="2">
    <location>
        <position position="97"/>
    </location>
    <ligand>
        <name>heme b</name>
        <dbReference type="ChEBI" id="CHEBI:60344"/>
        <label>b566</label>
    </ligand>
    <ligandPart>
        <name>Fe</name>
        <dbReference type="ChEBI" id="CHEBI:18248"/>
    </ligandPart>
</feature>
<feature type="binding site" description="axial binding residue" evidence="2">
    <location>
        <position position="182"/>
    </location>
    <ligand>
        <name>heme b</name>
        <dbReference type="ChEBI" id="CHEBI:60344"/>
        <label>b562</label>
    </ligand>
    <ligandPart>
        <name>Fe</name>
        <dbReference type="ChEBI" id="CHEBI:18248"/>
    </ligandPart>
</feature>
<feature type="binding site" description="axial binding residue" evidence="2">
    <location>
        <position position="196"/>
    </location>
    <ligand>
        <name>heme b</name>
        <dbReference type="ChEBI" id="CHEBI:60344"/>
        <label>b566</label>
    </ligand>
    <ligandPart>
        <name>Fe</name>
        <dbReference type="ChEBI" id="CHEBI:18248"/>
    </ligandPart>
</feature>
<feature type="binding site" evidence="2">
    <location>
        <position position="201"/>
    </location>
    <ligand>
        <name>a ubiquinone</name>
        <dbReference type="ChEBI" id="CHEBI:16389"/>
    </ligand>
</feature>
<feature type="sequence variant" description="In strain: Ryukyu wild boar 6.">
    <original>V</original>
    <variation>I</variation>
    <location>
        <position position="123"/>
    </location>
</feature>
<feature type="sequence variant" description="In strain: Ryukyu wild boar 6.">
    <original>I</original>
    <variation>T</variation>
    <location>
        <position position="184"/>
    </location>
</feature>
<feature type="sequence variant" description="In strain: Japanese wild boar 4, Japanese wild boar 11 and AWB10.">
    <original>M</original>
    <variation>I</variation>
    <location>
        <position position="215"/>
    </location>
</feature>
<feature type="sequence variant" description="In strain: Bulgarian 2 and Meishan.">
    <original>V</original>
    <variation>M</variation>
    <location>
        <position position="295"/>
    </location>
</feature>
<feature type="sequence variant" description="In strain: Asian domestic pig, Landrace, Chinese Diannan short-ear, Large white 1, Japanese wild boar, P2, Ryukyu wild boar, Satsumae 28, Seishan, Ssc2, AWB10, AWB11, EWB3 and LW1.">
    <original>G</original>
    <variation>S</variation>
    <location>
        <position position="314"/>
    </location>
</feature>
<feature type="sequence variant" description="In strain: IB9, IB14, IB16, Sardinian wild boar 2 and Ssc3.">
    <original>I</original>
    <variation>V</variation>
    <location>
        <position position="368"/>
    </location>
</feature>
<feature type="sequence conflict" description="In Ref. 1; CAA39742." evidence="6" ref="1">
    <original>L</original>
    <variation>M</variation>
    <location>
        <position position="198"/>
    </location>
</feature>
<accession>P24964</accession>
<accession>O78725</accession>
<accession>Q35918</accession>
<accession>Q36542</accession>
<accession>Q36550</accession>
<accession>Q36979</accession>
<accession>Q37077</accession>
<accession>Q94PU4</accession>
<accession>Q9T433</accession>
<evidence type="ECO:0000250" key="1"/>
<evidence type="ECO:0000250" key="2">
    <source>
        <dbReference type="UniProtKB" id="P00157"/>
    </source>
</evidence>
<evidence type="ECO:0000255" key="3">
    <source>
        <dbReference type="PROSITE-ProRule" id="PRU00967"/>
    </source>
</evidence>
<evidence type="ECO:0000255" key="4">
    <source>
        <dbReference type="PROSITE-ProRule" id="PRU00968"/>
    </source>
</evidence>
<evidence type="ECO:0000269" key="5">
    <source>
    </source>
</evidence>
<evidence type="ECO:0000305" key="6"/>
<geneLocation type="mitochondrion"/>
<sequence length="379" mass="42782">MTNIRKSHPLMKIINNAFIDLPAPSNISSWWNFGSLLGICLILQILTGLFLAMHYTSDTTTAFSSVTHICRDVNYGWVIRYLHANGASMFFICLFIHVGRGLYYGSYMFLETWNIGVVLLFTVMATAFMGYVLPWGQMSFWGATVITNLLSAIPYIGTDLVEWIWGGFSVDKATLTRFFAFHFILPFIITALAAVHLLFLHETGSNNPTGISSDMDKIPFHPYYTIKDILGALFMMLILLILVLFSPDLLGDPDNYTPANPLNTPPHIKPEWYFLFAYAILRSIPNKLGGVLALVASILILILMPMLHTSKQRGMMFRPLSQCLFWMLVADLITLTWIGGQPVEHPFIIIGQLASILYFLIILVLMPITSIIENNLLKW</sequence>
<proteinExistence type="evidence at protein level"/>
<dbReference type="EMBL" id="X56295">
    <property type="protein sequence ID" value="CAA39742.1"/>
    <property type="molecule type" value="Genomic_DNA"/>
</dbReference>
<dbReference type="EMBL" id="AJ002189">
    <property type="protein sequence ID" value="CAA05239.1"/>
    <property type="molecule type" value="Genomic_DNA"/>
</dbReference>
<dbReference type="EMBL" id="AF034253">
    <property type="protein sequence ID" value="AAD34197.1"/>
    <property type="molecule type" value="Genomic_DNA"/>
</dbReference>
<dbReference type="EMBL" id="Z50079">
    <property type="protein sequence ID" value="CAA90410.1"/>
    <property type="molecule type" value="Genomic_DNA"/>
</dbReference>
<dbReference type="EMBL" id="Z50085">
    <property type="protein sequence ID" value="CAA90416.1"/>
    <property type="molecule type" value="Genomic_DNA"/>
</dbReference>
<dbReference type="EMBL" id="Z50086">
    <property type="protein sequence ID" value="CAA90417.1"/>
    <property type="molecule type" value="Genomic_DNA"/>
</dbReference>
<dbReference type="EMBL" id="Z50087">
    <property type="protein sequence ID" value="CAA90418.1"/>
    <property type="molecule type" value="Genomic_DNA"/>
</dbReference>
<dbReference type="EMBL" id="Z50088">
    <property type="protein sequence ID" value="CAA90419.1"/>
    <property type="molecule type" value="Genomic_DNA"/>
</dbReference>
<dbReference type="EMBL" id="Z50089">
    <property type="protein sequence ID" value="CAA90420.1"/>
    <property type="molecule type" value="Genomic_DNA"/>
</dbReference>
<dbReference type="EMBL" id="AB015065">
    <property type="protein sequence ID" value="BAA28876.1"/>
    <property type="molecule type" value="Genomic_DNA"/>
</dbReference>
<dbReference type="EMBL" id="AB015066">
    <property type="protein sequence ID" value="BAA28877.1"/>
    <property type="molecule type" value="Genomic_DNA"/>
</dbReference>
<dbReference type="EMBL" id="AB015067">
    <property type="protein sequence ID" value="BAA28878.1"/>
    <property type="molecule type" value="Genomic_DNA"/>
</dbReference>
<dbReference type="EMBL" id="AB015068">
    <property type="protein sequence ID" value="BAA28879.1"/>
    <property type="molecule type" value="Genomic_DNA"/>
</dbReference>
<dbReference type="EMBL" id="AB015071">
    <property type="protein sequence ID" value="BAA28882.1"/>
    <property type="molecule type" value="Genomic_DNA"/>
</dbReference>
<dbReference type="EMBL" id="AB015072">
    <property type="protein sequence ID" value="BAA28883.1"/>
    <property type="molecule type" value="Genomic_DNA"/>
</dbReference>
<dbReference type="EMBL" id="AB015073">
    <property type="protein sequence ID" value="BAA28884.1"/>
    <property type="molecule type" value="Genomic_DNA"/>
</dbReference>
<dbReference type="EMBL" id="AB015074">
    <property type="protein sequence ID" value="BAA28885.1"/>
    <property type="molecule type" value="Genomic_DNA"/>
</dbReference>
<dbReference type="EMBL" id="AB015076">
    <property type="protein sequence ID" value="BAA28887.1"/>
    <property type="molecule type" value="Genomic_DNA"/>
</dbReference>
<dbReference type="EMBL" id="AB015079">
    <property type="protein sequence ID" value="BAA28890.1"/>
    <property type="molecule type" value="Genomic_DNA"/>
</dbReference>
<dbReference type="EMBL" id="AB015080">
    <property type="protein sequence ID" value="BAA28891.1"/>
    <property type="molecule type" value="Genomic_DNA"/>
</dbReference>
<dbReference type="EMBL" id="AB015081">
    <property type="protein sequence ID" value="BAA28892.1"/>
    <property type="molecule type" value="Genomic_DNA"/>
</dbReference>
<dbReference type="EMBL" id="AF136541">
    <property type="protein sequence ID" value="AAF62354.1"/>
    <property type="molecule type" value="Genomic_DNA"/>
</dbReference>
<dbReference type="EMBL" id="AF136542">
    <property type="protein sequence ID" value="AAF62355.1"/>
    <property type="molecule type" value="Genomic_DNA"/>
</dbReference>
<dbReference type="EMBL" id="AF136543">
    <property type="protein sequence ID" value="AAF62356.1"/>
    <property type="molecule type" value="Genomic_DNA"/>
</dbReference>
<dbReference type="EMBL" id="AF136544">
    <property type="protein sequence ID" value="AAF62357.1"/>
    <property type="molecule type" value="Genomic_DNA"/>
</dbReference>
<dbReference type="EMBL" id="AF136545">
    <property type="protein sequence ID" value="AAF62358.1"/>
    <property type="molecule type" value="Genomic_DNA"/>
</dbReference>
<dbReference type="EMBL" id="AF136546">
    <property type="protein sequence ID" value="AAF62359.1"/>
    <property type="molecule type" value="Genomic_DNA"/>
</dbReference>
<dbReference type="EMBL" id="AF136547">
    <property type="protein sequence ID" value="AAF62360.1"/>
    <property type="molecule type" value="Genomic_DNA"/>
</dbReference>
<dbReference type="EMBL" id="AF136548">
    <property type="protein sequence ID" value="AAF62362.1"/>
    <property type="molecule type" value="Genomic_DNA"/>
</dbReference>
<dbReference type="EMBL" id="AF136549">
    <property type="protein sequence ID" value="AAF62361.1"/>
    <property type="molecule type" value="Genomic_DNA"/>
</dbReference>
<dbReference type="EMBL" id="AF136550">
    <property type="protein sequence ID" value="AAF62363.1"/>
    <property type="molecule type" value="Genomic_DNA"/>
</dbReference>
<dbReference type="EMBL" id="AF136551">
    <property type="protein sequence ID" value="AAF62364.1"/>
    <property type="molecule type" value="Genomic_DNA"/>
</dbReference>
<dbReference type="EMBL" id="AF136552">
    <property type="protein sequence ID" value="AAF62365.1"/>
    <property type="molecule type" value="Genomic_DNA"/>
</dbReference>
<dbReference type="EMBL" id="AF163099">
    <property type="protein sequence ID" value="AAF62368.1"/>
    <property type="molecule type" value="Genomic_DNA"/>
</dbReference>
<dbReference type="EMBL" id="AF163100">
    <property type="protein sequence ID" value="AAF62369.1"/>
    <property type="molecule type" value="Genomic_DNA"/>
</dbReference>
<dbReference type="EMBL" id="AF304203">
    <property type="protein sequence ID" value="AAG28228.1"/>
    <property type="molecule type" value="Genomic_DNA"/>
</dbReference>
<dbReference type="EMBL" id="AJ314556">
    <property type="protein sequence ID" value="CAC85257.1"/>
    <property type="molecule type" value="Genomic_DNA"/>
</dbReference>
<dbReference type="EMBL" id="AJ314557">
    <property type="protein sequence ID" value="CAC85258.1"/>
    <property type="molecule type" value="Genomic_DNA"/>
</dbReference>
<dbReference type="EMBL" id="AJ314558">
    <property type="protein sequence ID" value="CAC85259.1"/>
    <property type="molecule type" value="Genomic_DNA"/>
</dbReference>
<dbReference type="EMBL" id="AY237484">
    <property type="protein sequence ID" value="AAO85585.1"/>
    <property type="molecule type" value="Genomic_DNA"/>
</dbReference>
<dbReference type="EMBL" id="AY237485">
    <property type="protein sequence ID" value="AAO85586.1"/>
    <property type="molecule type" value="Genomic_DNA"/>
</dbReference>
<dbReference type="EMBL" id="AY237487">
    <property type="protein sequence ID" value="AAO85588.1"/>
    <property type="molecule type" value="Genomic_DNA"/>
</dbReference>
<dbReference type="EMBL" id="AY237488">
    <property type="protein sequence ID" value="AAO85589.1"/>
    <property type="molecule type" value="Genomic_DNA"/>
</dbReference>
<dbReference type="EMBL" id="AY237489">
    <property type="protein sequence ID" value="AAO85590.1"/>
    <property type="molecule type" value="Genomic_DNA"/>
</dbReference>
<dbReference type="EMBL" id="AY237490">
    <property type="protein sequence ID" value="AAO85591.1"/>
    <property type="molecule type" value="Genomic_DNA"/>
</dbReference>
<dbReference type="EMBL" id="AY237491">
    <property type="protein sequence ID" value="AAO85592.1"/>
    <property type="molecule type" value="Genomic_DNA"/>
</dbReference>
<dbReference type="EMBL" id="AY237492">
    <property type="protein sequence ID" value="AAO85593.1"/>
    <property type="molecule type" value="Genomic_DNA"/>
</dbReference>
<dbReference type="EMBL" id="AY237493">
    <property type="protein sequence ID" value="AAO85594.1"/>
    <property type="molecule type" value="Genomic_DNA"/>
</dbReference>
<dbReference type="EMBL" id="AY237494">
    <property type="protein sequence ID" value="AAO85595.1"/>
    <property type="molecule type" value="Genomic_DNA"/>
</dbReference>
<dbReference type="EMBL" id="AY237496">
    <property type="protein sequence ID" value="AAO85597.1"/>
    <property type="molecule type" value="Genomic_DNA"/>
</dbReference>
<dbReference type="EMBL" id="AY237497">
    <property type="protein sequence ID" value="AAO85598.1"/>
    <property type="molecule type" value="Genomic_DNA"/>
</dbReference>
<dbReference type="EMBL" id="AY237498">
    <property type="protein sequence ID" value="AAO85599.1"/>
    <property type="molecule type" value="Genomic_DNA"/>
</dbReference>
<dbReference type="EMBL" id="AY237499">
    <property type="protein sequence ID" value="AAO85600.1"/>
    <property type="molecule type" value="Genomic_DNA"/>
</dbReference>
<dbReference type="EMBL" id="AY237500">
    <property type="protein sequence ID" value="AAO85601.1"/>
    <property type="molecule type" value="Genomic_DNA"/>
</dbReference>
<dbReference type="EMBL" id="AY237501">
    <property type="protein sequence ID" value="AAO85602.1"/>
    <property type="molecule type" value="Genomic_DNA"/>
</dbReference>
<dbReference type="EMBL" id="AY237502">
    <property type="protein sequence ID" value="AAO85603.1"/>
    <property type="molecule type" value="Genomic_DNA"/>
</dbReference>
<dbReference type="EMBL" id="AY237503">
    <property type="protein sequence ID" value="AAO85604.1"/>
    <property type="molecule type" value="Genomic_DNA"/>
</dbReference>
<dbReference type="EMBL" id="AY237504">
    <property type="protein sequence ID" value="AAO85605.1"/>
    <property type="molecule type" value="Genomic_DNA"/>
</dbReference>
<dbReference type="EMBL" id="AY237505">
    <property type="protein sequence ID" value="AAO85606.1"/>
    <property type="molecule type" value="Genomic_DNA"/>
</dbReference>
<dbReference type="EMBL" id="AY237506">
    <property type="protein sequence ID" value="AAO85607.1"/>
    <property type="molecule type" value="Genomic_DNA"/>
</dbReference>
<dbReference type="EMBL" id="AY237507">
    <property type="protein sequence ID" value="AAO85608.1"/>
    <property type="molecule type" value="Genomic_DNA"/>
</dbReference>
<dbReference type="EMBL" id="AY237508">
    <property type="protein sequence ID" value="AAO85609.1"/>
    <property type="molecule type" value="Genomic_DNA"/>
</dbReference>
<dbReference type="EMBL" id="AY237509">
    <property type="protein sequence ID" value="AAO85610.1"/>
    <property type="molecule type" value="Genomic_DNA"/>
</dbReference>
<dbReference type="EMBL" id="AY237510">
    <property type="protein sequence ID" value="AAO85611.1"/>
    <property type="molecule type" value="Genomic_DNA"/>
</dbReference>
<dbReference type="EMBL" id="AY237511">
    <property type="protein sequence ID" value="AAO85612.1"/>
    <property type="molecule type" value="Genomic_DNA"/>
</dbReference>
<dbReference type="EMBL" id="AY237512">
    <property type="protein sequence ID" value="AAO85613.1"/>
    <property type="molecule type" value="Genomic_DNA"/>
</dbReference>
<dbReference type="EMBL" id="AY237513">
    <property type="protein sequence ID" value="AAO85614.1"/>
    <property type="molecule type" value="Genomic_DNA"/>
</dbReference>
<dbReference type="EMBL" id="AY237514">
    <property type="protein sequence ID" value="AAO85615.1"/>
    <property type="molecule type" value="Genomic_DNA"/>
</dbReference>
<dbReference type="EMBL" id="AY237515">
    <property type="protein sequence ID" value="AAO85616.1"/>
    <property type="molecule type" value="Genomic_DNA"/>
</dbReference>
<dbReference type="EMBL" id="AY237517">
    <property type="protein sequence ID" value="AAO85618.1"/>
    <property type="molecule type" value="Genomic_DNA"/>
</dbReference>
<dbReference type="EMBL" id="AY237518">
    <property type="protein sequence ID" value="AAO85619.1"/>
    <property type="molecule type" value="Genomic_DNA"/>
</dbReference>
<dbReference type="EMBL" id="AY237519">
    <property type="protein sequence ID" value="AAO85620.1"/>
    <property type="molecule type" value="Genomic_DNA"/>
</dbReference>
<dbReference type="EMBL" id="AY237520">
    <property type="protein sequence ID" value="AAO85621.1"/>
    <property type="molecule type" value="Genomic_DNA"/>
</dbReference>
<dbReference type="EMBL" id="AY237522">
    <property type="protein sequence ID" value="AAO85623.1"/>
    <property type="molecule type" value="Genomic_DNA"/>
</dbReference>
<dbReference type="EMBL" id="AY237523">
    <property type="protein sequence ID" value="AAO85624.1"/>
    <property type="molecule type" value="Genomic_DNA"/>
</dbReference>
<dbReference type="EMBL" id="AY237526">
    <property type="protein sequence ID" value="AAO85627.1"/>
    <property type="molecule type" value="Genomic_DNA"/>
</dbReference>
<dbReference type="EMBL" id="AY237527">
    <property type="protein sequence ID" value="AAO85628.1"/>
    <property type="molecule type" value="Genomic_DNA"/>
</dbReference>
<dbReference type="EMBL" id="AY237528">
    <property type="protein sequence ID" value="AAO85629.1"/>
    <property type="molecule type" value="Genomic_DNA"/>
</dbReference>
<dbReference type="EMBL" id="AY237529">
    <property type="protein sequence ID" value="AAO85630.1"/>
    <property type="molecule type" value="Genomic_DNA"/>
</dbReference>
<dbReference type="EMBL" id="AY237533">
    <property type="protein sequence ID" value="AAO85634.1"/>
    <property type="molecule type" value="Genomic_DNA"/>
</dbReference>
<dbReference type="EMBL" id="AY237534">
    <property type="protein sequence ID" value="AAO85635.1"/>
    <property type="molecule type" value="Genomic_DNA"/>
</dbReference>
<dbReference type="EMBL" id="AF486858">
    <property type="protein sequence ID" value="AAQ06031.1"/>
    <property type="molecule type" value="Genomic_DNA"/>
</dbReference>
<dbReference type="EMBL" id="AF486866">
    <property type="protein sequence ID" value="AAQ06135.1"/>
    <property type="molecule type" value="Genomic_DNA"/>
</dbReference>
<dbReference type="EMBL" id="AF486869">
    <property type="protein sequence ID" value="AAQ06174.1"/>
    <property type="molecule type" value="Genomic_DNA"/>
</dbReference>
<dbReference type="EMBL" id="D17739">
    <property type="protein sequence ID" value="BAA04592.1"/>
    <property type="molecule type" value="Genomic_DNA"/>
</dbReference>
<dbReference type="PIR" id="T10984">
    <property type="entry name" value="S17418"/>
</dbReference>
<dbReference type="RefSeq" id="NP_008646.1">
    <property type="nucleotide sequence ID" value="NC_000845.1"/>
</dbReference>
<dbReference type="PDB" id="8IOG">
    <property type="method" value="EM"/>
    <property type="resolution" value="2.88 A"/>
    <property type="chains" value="A/a=1-379"/>
</dbReference>
<dbReference type="PDBsum" id="8IOG"/>
<dbReference type="EMDB" id="EMD-35618"/>
<dbReference type="SMR" id="P24964"/>
<dbReference type="FunCoup" id="P24964">
    <property type="interactions" value="121"/>
</dbReference>
<dbReference type="STRING" id="9823.ENSSSCP00000019147"/>
<dbReference type="BindingDB" id="P24964"/>
<dbReference type="ChEMBL" id="CHEMBL2366425"/>
<dbReference type="PaxDb" id="9823-ENSSSCP00000019147"/>
<dbReference type="PeptideAtlas" id="P24964"/>
<dbReference type="GeneID" id="808513"/>
<dbReference type="KEGG" id="ssc:808513"/>
<dbReference type="CTD" id="4519"/>
<dbReference type="eggNOG" id="KOG4663">
    <property type="taxonomic scope" value="Eukaryota"/>
</dbReference>
<dbReference type="InParanoid" id="P24964"/>
<dbReference type="OrthoDB" id="244at2759"/>
<dbReference type="ChiTaRS" id="CYTB">
    <property type="organism name" value="pig"/>
</dbReference>
<dbReference type="PRO" id="PR:P24964"/>
<dbReference type="Proteomes" id="UP000008227">
    <property type="component" value="Mitochondrion"/>
</dbReference>
<dbReference type="Proteomes" id="UP000314985">
    <property type="component" value="Mitochondrion"/>
</dbReference>
<dbReference type="Proteomes" id="UP000694570">
    <property type="component" value="Unplaced"/>
</dbReference>
<dbReference type="Proteomes" id="UP000694571">
    <property type="component" value="Unplaced"/>
</dbReference>
<dbReference type="Proteomes" id="UP000694720">
    <property type="component" value="Unplaced"/>
</dbReference>
<dbReference type="Proteomes" id="UP000694722">
    <property type="component" value="Unplaced"/>
</dbReference>
<dbReference type="Proteomes" id="UP000694723">
    <property type="component" value="Unplaced"/>
</dbReference>
<dbReference type="Proteomes" id="UP000694724">
    <property type="component" value="Unplaced"/>
</dbReference>
<dbReference type="Proteomes" id="UP000694725">
    <property type="component" value="Unplaced"/>
</dbReference>
<dbReference type="Proteomes" id="UP000694726">
    <property type="component" value="Unplaced"/>
</dbReference>
<dbReference type="Proteomes" id="UP000694727">
    <property type="component" value="Unplaced"/>
</dbReference>
<dbReference type="Proteomes" id="UP000694728">
    <property type="component" value="Unplaced"/>
</dbReference>
<dbReference type="GO" id="GO:0016020">
    <property type="term" value="C:membrane"/>
    <property type="evidence" value="ECO:0000318"/>
    <property type="project" value="GO_Central"/>
</dbReference>
<dbReference type="GO" id="GO:0005743">
    <property type="term" value="C:mitochondrial inner membrane"/>
    <property type="evidence" value="ECO:0007669"/>
    <property type="project" value="UniProtKB-SubCell"/>
</dbReference>
<dbReference type="GO" id="GO:0045275">
    <property type="term" value="C:respiratory chain complex III"/>
    <property type="evidence" value="ECO:0000318"/>
    <property type="project" value="GO_Central"/>
</dbReference>
<dbReference type="GO" id="GO:0046872">
    <property type="term" value="F:metal ion binding"/>
    <property type="evidence" value="ECO:0007669"/>
    <property type="project" value="UniProtKB-KW"/>
</dbReference>
<dbReference type="GO" id="GO:0008121">
    <property type="term" value="F:ubiquinol-cytochrome-c reductase activity"/>
    <property type="evidence" value="ECO:0000314"/>
    <property type="project" value="UniProtKB"/>
</dbReference>
<dbReference type="GO" id="GO:0006122">
    <property type="term" value="P:mitochondrial electron transport, ubiquinol to cytochrome c"/>
    <property type="evidence" value="ECO:0000314"/>
    <property type="project" value="UniProtKB"/>
</dbReference>
<dbReference type="CDD" id="cd00290">
    <property type="entry name" value="cytochrome_b_C"/>
    <property type="match status" value="1"/>
</dbReference>
<dbReference type="CDD" id="cd00284">
    <property type="entry name" value="Cytochrome_b_N"/>
    <property type="match status" value="1"/>
</dbReference>
<dbReference type="FunFam" id="1.20.810.10:FF:000002">
    <property type="entry name" value="Cytochrome b"/>
    <property type="match status" value="1"/>
</dbReference>
<dbReference type="Gene3D" id="1.20.810.10">
    <property type="entry name" value="Cytochrome Bc1 Complex, Chain C"/>
    <property type="match status" value="1"/>
</dbReference>
<dbReference type="InterPro" id="IPR005798">
    <property type="entry name" value="Cyt_b/b6_C"/>
</dbReference>
<dbReference type="InterPro" id="IPR036150">
    <property type="entry name" value="Cyt_b/b6_C_sf"/>
</dbReference>
<dbReference type="InterPro" id="IPR005797">
    <property type="entry name" value="Cyt_b/b6_N"/>
</dbReference>
<dbReference type="InterPro" id="IPR027387">
    <property type="entry name" value="Cytb/b6-like_sf"/>
</dbReference>
<dbReference type="InterPro" id="IPR030689">
    <property type="entry name" value="Cytochrome_b"/>
</dbReference>
<dbReference type="InterPro" id="IPR048260">
    <property type="entry name" value="Cytochrome_b_C_euk/bac"/>
</dbReference>
<dbReference type="InterPro" id="IPR048259">
    <property type="entry name" value="Cytochrome_b_N_euk/bac"/>
</dbReference>
<dbReference type="InterPro" id="IPR016174">
    <property type="entry name" value="Di-haem_cyt_TM"/>
</dbReference>
<dbReference type="PANTHER" id="PTHR19271">
    <property type="entry name" value="CYTOCHROME B"/>
    <property type="match status" value="1"/>
</dbReference>
<dbReference type="PANTHER" id="PTHR19271:SF16">
    <property type="entry name" value="CYTOCHROME B"/>
    <property type="match status" value="1"/>
</dbReference>
<dbReference type="Pfam" id="PF00032">
    <property type="entry name" value="Cytochrom_B_C"/>
    <property type="match status" value="1"/>
</dbReference>
<dbReference type="Pfam" id="PF00033">
    <property type="entry name" value="Cytochrome_B"/>
    <property type="match status" value="1"/>
</dbReference>
<dbReference type="PIRSF" id="PIRSF038885">
    <property type="entry name" value="COB"/>
    <property type="match status" value="1"/>
</dbReference>
<dbReference type="SUPFAM" id="SSF81648">
    <property type="entry name" value="a domain/subunit of cytochrome bc1 complex (Ubiquinol-cytochrome c reductase)"/>
    <property type="match status" value="1"/>
</dbReference>
<dbReference type="SUPFAM" id="SSF81342">
    <property type="entry name" value="Transmembrane di-heme cytochromes"/>
    <property type="match status" value="1"/>
</dbReference>
<dbReference type="PROSITE" id="PS51003">
    <property type="entry name" value="CYTB_CTER"/>
    <property type="match status" value="1"/>
</dbReference>
<dbReference type="PROSITE" id="PS51002">
    <property type="entry name" value="CYTB_NTER"/>
    <property type="match status" value="1"/>
</dbReference>
<reference key="1">
    <citation type="journal article" date="1991" name="J. Mol. Evol.">
        <title>Evolution of the cytochrome b gene of mammals.</title>
        <authorList>
            <person name="Irwin D.M."/>
            <person name="Kocher T.D."/>
            <person name="Wilson A.C."/>
        </authorList>
    </citation>
    <scope>NUCLEOTIDE SEQUENCE [GENOMIC DNA]</scope>
</reference>
<reference key="2">
    <citation type="journal article" date="1998" name="J. Mol. Evol.">
        <title>The complete mitochondrial DNA sequence of the pig (Sus scrofa).</title>
        <authorList>
            <person name="Ursing B.M."/>
            <person name="Arnason U."/>
        </authorList>
    </citation>
    <scope>NUCLEOTIDE SEQUENCE [GENOMIC DNA]</scope>
</reference>
<reference key="3">
    <citation type="journal article" date="1999" name="Gene">
        <title>Complete nucleotide sequence of pig (Sus scrofa) mitochondrial genome and dating evolutionary divergence within artiodactyla.</title>
        <authorList>
            <person name="Lin C.S."/>
            <person name="Sun Y.L."/>
            <person name="Liu C.Y."/>
            <person name="Yang P.C."/>
            <person name="Chang L.C."/>
            <person name="Cheng I.C."/>
            <person name="Mao S.J.T."/>
            <person name="Huang M.C."/>
        </authorList>
    </citation>
    <scope>NUCLEOTIDE SEQUENCE [LARGE SCALE GENOMIC DNA]</scope>
    <source>
        <strain>Landrace</strain>
    </source>
</reference>
<reference key="4">
    <citation type="journal article" date="1996" name="J. Mammal. Evol.">
        <title>Evolutionary genetics of the suiformes.</title>
        <authorList>
            <person name="Randi E."/>
            <person name="Lucchini V."/>
            <person name="Diong C."/>
        </authorList>
    </citation>
    <scope>NUCLEOTIDE SEQUENCE [GENOMIC DNA]</scope>
    <source>
        <strain>Various strains</strain>
        <tissue>Liver</tissue>
    </source>
</reference>
<reference key="5">
    <citation type="submission" date="1998-05" db="EMBL/GenBank/DDBJ databases">
        <title>Genetic relationship and distribution of Japanese wild boar (Sus scrofa leucomystax) and Ryukyu wild boar (Sus scrofa riukiuanus) analyzed by mitochondrial DNA.</title>
        <authorList>
            <person name="Watanobe T."/>
            <person name="Okumura N."/>
            <person name="Ishiguro N."/>
            <person name="Nakano M."/>
            <person name="Matsui A."/>
            <person name="Sahara M."/>
            <person name="Komatsu M."/>
        </authorList>
    </citation>
    <scope>NUCLEOTIDE SEQUENCE [GENOMIC DNA]</scope>
    <source>
        <strain>Various strains</strain>
    </source>
</reference>
<reference key="6">
    <citation type="journal article" date="2000" name="Genetics">
        <title>The origin of the domestic pig: independent domestication and subsequent introgression.</title>
        <authorList>
            <person name="Giuffra E."/>
            <person name="Kijas J.M.H."/>
            <person name="Amarger V."/>
            <person name="Carlborg O."/>
            <person name="Jeon J.-T."/>
            <person name="Andersson L."/>
        </authorList>
    </citation>
    <scope>NUCLEOTIDE SEQUENCE [GENOMIC DNA]</scope>
    <source>
        <strain>AWB10</strain>
        <strain>AWB11</strain>
        <strain>Cook islands</strain>
        <strain>EWB1</strain>
        <strain>EWB2</strain>
        <strain>EWB3</strain>
        <strain>H1</strain>
        <strain>H2</strain>
        <strain>Israel Wild Boar 1</strain>
        <strain>L1</strain>
        <strain>L2</strain>
        <strain>LW1</strain>
        <strain>LW2</strain>
        <strain>Ma</strain>
    </source>
</reference>
<reference key="7">
    <citation type="journal article" date="2001" name="J. Mol. Evol.">
        <title>A phylogenetic study of the origin of the domestic pig estimated from the near-complete mtDNA genome.</title>
        <authorList>
            <person name="Kijas J.M.H."/>
            <person name="Andersson L."/>
        </authorList>
    </citation>
    <scope>NUCLEOTIDE SEQUENCE [GENOMIC DNA]</scope>
    <source>
        <strain>Swedish wild boar</strain>
    </source>
</reference>
<reference key="8">
    <citation type="submission" date="2001-05" db="EMBL/GenBank/DDBJ databases">
        <title>Evidence of two genetically deeply divergent species of warthog, Phacochoerus africanus and P. aethiopicus (Artiodactyla: Suiformes) in East Africa.</title>
        <authorList>
            <person name="Randi E."/>
            <person name="d'Huart J.P."/>
            <person name="Lucchini V."/>
            <person name="Aman R."/>
        </authorList>
    </citation>
    <scope>NUCLEOTIDE SEQUENCE [GENOMIC DNA]</scope>
    <source>
        <strain>Ssc1</strain>
        <strain>Ssc2</strain>
        <strain>Ssc3</strain>
    </source>
</reference>
<reference key="9">
    <citation type="journal article" date="2003" name="Anim. Genet.">
        <title>Mitochondrial DNA sequence variation and phylogenetic relationships among Iberian pigs and other domestic and wild pig populations.</title>
        <authorList>
            <person name="Alves E."/>
            <person name="Ovilo C."/>
            <person name="Rodriguez M.C."/>
            <person name="Silio L."/>
        </authorList>
    </citation>
    <scope>NUCLEOTIDE SEQUENCE [GENOMIC DNA]</scope>
    <source>
        <strain>Basque</strain>
        <strain>D1</strain>
        <strain>D2</strain>
        <strain>D3</strain>
        <strain>D4</strain>
        <strain>D6</strain>
        <strain>D7</strain>
        <strain>Hungarian Mangalitza</strain>
        <strain>IB1</strain>
        <strain>IB10</strain>
        <strain>IB11</strain>
        <strain>IB13</strain>
        <strain>IB14</strain>
        <strain>IB15</strain>
        <strain>IB16</strain>
        <strain>IB17</strain>
        <strain>IB18</strain>
        <strain>IB19</strain>
        <strain>IB2</strain>
        <strain>IB20</strain>
        <strain>IB21</strain>
        <strain>IB22</strain>
        <strain>IB23</strain>
        <strain>IB24</strain>
        <strain>IB25</strain>
        <strain>IB26</strain>
        <strain>IB4</strain>
        <strain>IB5</strain>
        <strain>IB6</strain>
        <strain>IB7</strain>
        <strain>IB8</strain>
        <strain>IB9</strain>
        <strain>LR1</strain>
        <strain>LR2</strain>
        <strain>P1</strain>
        <strain>P2</strain>
        <strain>SWB1</strain>
        <strain>SWB2</strain>
        <strain>SWB3</strain>
        <strain>SWB4</strain>
        <strain>SWB5</strain>
        <strain>SWB6</strain>
    </source>
</reference>
<reference key="10">
    <citation type="journal article" date="2003" name="J. Hered.">
        <title>Genetic diversity present within the near-complete mtDNA genome of 17 breeds of indigenous Chinese pigs.</title>
        <authorList>
            <person name="Yang J."/>
            <person name="Wang J."/>
            <person name="Kijas J."/>
            <person name="Liu B."/>
            <person name="Han H."/>
            <person name="Yu M."/>
            <person name="Yang H."/>
            <person name="Zhao S."/>
            <person name="Li K."/>
        </authorList>
    </citation>
    <scope>NUCLEOTIDE SEQUENCE [GENOMIC DNA]</scope>
    <source>
        <strain>Chinese Diannan short-ear</strain>
        <strain>Duroc</strain>
        <strain>Landrace</strain>
    </source>
</reference>
<reference key="11">
    <citation type="journal article" date="1995" name="Anim. Genet.">
        <title>SSCP analysis of pig mitochondrial DNA D-loop region polymorphism.</title>
        <authorList>
            <person name="Takeda K."/>
            <person name="Onishi A."/>
            <person name="Ishida N."/>
            <person name="Kawakami K."/>
            <person name="Komatsu M."/>
            <person name="Inumaru S."/>
        </authorList>
    </citation>
    <scope>NUCLEOTIDE SEQUENCE [GENOMIC DNA] OF 288-379</scope>
    <source>
        <strain>Meishan</strain>
        <tissue>Liver</tissue>
    </source>
</reference>
<reference key="12">
    <citation type="journal article" date="2012" name="J. Am. Chem. Soc.">
        <title>Computational discovery of picomolar Q(o) site inhibitors of cytochrome bc1 complex.</title>
        <authorList>
            <person name="Hao G.F."/>
            <person name="Wang F."/>
            <person name="Li H."/>
            <person name="Zhu X.L."/>
            <person name="Yang W.C."/>
            <person name="Huang L.S."/>
            <person name="Wu J.W."/>
            <person name="Berry E.A."/>
            <person name="Yang G.F."/>
        </authorList>
    </citation>
    <scope>FUNCTION</scope>
</reference>